<feature type="chain" id="PRO_0000222730" description="Core protein VP7">
    <location>
        <begin position="1"/>
        <end position="349"/>
    </location>
</feature>
<feature type="glycosylation site" description="N-linked (GlcNAc...) asparagine; by host" evidence="1">
    <location>
        <position position="287"/>
    </location>
</feature>
<feature type="helix" evidence="3">
    <location>
        <begin position="2"/>
        <end position="15"/>
    </location>
</feature>
<feature type="strand" evidence="3">
    <location>
        <begin position="20"/>
        <end position="22"/>
    </location>
</feature>
<feature type="helix" evidence="3">
    <location>
        <begin position="27"/>
        <end position="44"/>
    </location>
</feature>
<feature type="helix" evidence="3">
    <location>
        <begin position="56"/>
        <end position="73"/>
    </location>
</feature>
<feature type="helix" evidence="3">
    <location>
        <begin position="90"/>
        <end position="93"/>
    </location>
</feature>
<feature type="helix" evidence="3">
    <location>
        <begin position="103"/>
        <end position="116"/>
    </location>
</feature>
<feature type="helix" evidence="3">
    <location>
        <begin position="128"/>
        <end position="130"/>
    </location>
</feature>
<feature type="strand" evidence="3">
    <location>
        <begin position="133"/>
        <end position="136"/>
    </location>
</feature>
<feature type="strand" evidence="3">
    <location>
        <begin position="148"/>
        <end position="155"/>
    </location>
</feature>
<feature type="strand" evidence="3">
    <location>
        <begin position="158"/>
        <end position="163"/>
    </location>
</feature>
<feature type="strand" evidence="3">
    <location>
        <begin position="168"/>
        <end position="170"/>
    </location>
</feature>
<feature type="helix" evidence="3">
    <location>
        <begin position="172"/>
        <end position="174"/>
    </location>
</feature>
<feature type="turn" evidence="3">
    <location>
        <begin position="175"/>
        <end position="177"/>
    </location>
</feature>
<feature type="strand" evidence="3">
    <location>
        <begin position="181"/>
        <end position="195"/>
    </location>
</feature>
<feature type="strand" evidence="3">
    <location>
        <begin position="197"/>
        <end position="199"/>
    </location>
</feature>
<feature type="strand" evidence="3">
    <location>
        <begin position="201"/>
        <end position="203"/>
    </location>
</feature>
<feature type="strand" evidence="3">
    <location>
        <begin position="209"/>
        <end position="212"/>
    </location>
</feature>
<feature type="strand" evidence="3">
    <location>
        <begin position="215"/>
        <end position="217"/>
    </location>
</feature>
<feature type="strand" evidence="3">
    <location>
        <begin position="223"/>
        <end position="225"/>
    </location>
</feature>
<feature type="strand" evidence="3">
    <location>
        <begin position="227"/>
        <end position="229"/>
    </location>
</feature>
<feature type="strand" evidence="3">
    <location>
        <begin position="231"/>
        <end position="234"/>
    </location>
</feature>
<feature type="strand" evidence="3">
    <location>
        <begin position="237"/>
        <end position="239"/>
    </location>
</feature>
<feature type="strand" evidence="3">
    <location>
        <begin position="241"/>
        <end position="254"/>
    </location>
</feature>
<feature type="helix" evidence="3">
    <location>
        <begin position="263"/>
        <end position="270"/>
    </location>
</feature>
<feature type="helix" evidence="3">
    <location>
        <begin position="276"/>
        <end position="286"/>
    </location>
</feature>
<feature type="strand" evidence="3">
    <location>
        <begin position="289"/>
        <end position="291"/>
    </location>
</feature>
<feature type="strand" evidence="3">
    <location>
        <begin position="293"/>
        <end position="295"/>
    </location>
</feature>
<feature type="helix" evidence="3">
    <location>
        <begin position="304"/>
        <end position="323"/>
    </location>
</feature>
<feature type="helix" evidence="3">
    <location>
        <begin position="341"/>
        <end position="347"/>
    </location>
</feature>
<organismHost>
    <name type="scientific">Antilocapra americana</name>
    <name type="common">Pronghorn</name>
    <dbReference type="NCBI Taxonomy" id="9891"/>
</organismHost>
<organismHost>
    <name type="scientific">Bos taurus</name>
    <name type="common">Bovine</name>
    <dbReference type="NCBI Taxonomy" id="9913"/>
</organismHost>
<organismHost>
    <name type="scientific">Capra hircus</name>
    <name type="common">Goat</name>
    <dbReference type="NCBI Taxonomy" id="9925"/>
</organismHost>
<organismHost>
    <name type="scientific">Culicoides variipennis</name>
    <name type="common">Biting midge</name>
    <dbReference type="NCBI Taxonomy" id="46212"/>
</organismHost>
<organismHost>
    <name type="scientific">Ovis aries</name>
    <name type="common">Sheep</name>
    <dbReference type="NCBI Taxonomy" id="9940"/>
</organismHost>
<keyword id="KW-0002">3D-structure</keyword>
<keyword id="KW-0167">Capsid protein</keyword>
<keyword id="KW-0325">Glycoprotein</keyword>
<keyword id="KW-1152">Outer capsid protein</keyword>
<keyword id="KW-0946">Virion</keyword>
<sequence>MDTIAARALTVMRACATLQEARIVLEANVMEILGIAINRYNGLTLRGVTMRPTSLAQRNEMFFMCLDMMLSAAGINVGPISPDYTQHMATIGVLATPEIPFTTEAANEIARVTGETSTWGPARQPYGFFLETEETFQPGRWFMRAAQAATAVVCGPDMIQVSLNAGARGDVQQIFQGRNDPMMIYLVWRRIENFAMAQGNSQQTQAGVTVSVGGVDMRAGRIIAWDGQAALHVRNPTQQNAMVQIQVVFYISMDKTLNQYPALTAEIFNVYSFRDHTWHGLRTAIRNRTTLPNMLPPIFPPNDRDSILTLLLLSTLADVYTVLRPEFAMHGVNPMPWPLTAAIARAAYV</sequence>
<accession>P18259</accession>
<comment type="function">
    <text>The VP7 protein is one of the five proteins (with VP1, VP3, VP4, and VP6) which form the inner capsid of the virus.</text>
</comment>
<comment type="subunit">
    <text>Homotrimer that assemble in a complex of 260 capsomers on an inner scaffold composed of VP3.</text>
</comment>
<comment type="subcellular location">
    <subcellularLocation>
        <location evidence="2">Virion</location>
    </subcellularLocation>
</comment>
<comment type="similarity">
    <text evidence="2">Belongs to the orbivirus VP7 family.</text>
</comment>
<name>VP7_BTV1S</name>
<dbReference type="EMBL" id="X53740">
    <property type="protein sequence ID" value="CAA37769.1"/>
    <property type="molecule type" value="Genomic_RNA"/>
</dbReference>
<dbReference type="PIR" id="S11206">
    <property type="entry name" value="S11206"/>
</dbReference>
<dbReference type="PDB" id="2BTV">
    <property type="method" value="X-ray"/>
    <property type="resolution" value="3.50 A"/>
    <property type="chains" value="C/D/E/F/G/H/I/J/P/Q/R/S/T=1-349"/>
</dbReference>
<dbReference type="PDBsum" id="2BTV"/>
<dbReference type="SMR" id="P18259"/>
<dbReference type="DIP" id="DIP-59521N"/>
<dbReference type="IntAct" id="P18259">
    <property type="interactions" value="2"/>
</dbReference>
<dbReference type="GlyCosmos" id="P18259">
    <property type="glycosylation" value="1 site, No reported glycans"/>
</dbReference>
<dbReference type="EvolutionaryTrace" id="P18259"/>
<dbReference type="GO" id="GO:0019031">
    <property type="term" value="C:viral envelope"/>
    <property type="evidence" value="ECO:0007669"/>
    <property type="project" value="InterPro"/>
</dbReference>
<dbReference type="GO" id="GO:0039624">
    <property type="term" value="C:viral outer capsid"/>
    <property type="evidence" value="ECO:0007669"/>
    <property type="project" value="UniProtKB-KW"/>
</dbReference>
<dbReference type="GO" id="GO:0046789">
    <property type="term" value="F:host cell surface receptor binding"/>
    <property type="evidence" value="ECO:0007669"/>
    <property type="project" value="InterPro"/>
</dbReference>
<dbReference type="GO" id="GO:0005198">
    <property type="term" value="F:structural molecule activity"/>
    <property type="evidence" value="ECO:0007669"/>
    <property type="project" value="InterPro"/>
</dbReference>
<dbReference type="GO" id="GO:0019064">
    <property type="term" value="P:fusion of virus membrane with host plasma membrane"/>
    <property type="evidence" value="ECO:0007669"/>
    <property type="project" value="InterPro"/>
</dbReference>
<dbReference type="Gene3D" id="2.60.120.170">
    <property type="match status" value="1"/>
</dbReference>
<dbReference type="Gene3D" id="1.10.250.10">
    <property type="entry name" value="Bluetongue Virus 10, subunit 1, domain 1"/>
    <property type="match status" value="1"/>
</dbReference>
<dbReference type="Gene3D" id="1.10.170.10">
    <property type="entry name" value="Bluetongue Virus 10, subunit 1, domain 3"/>
    <property type="match status" value="1"/>
</dbReference>
<dbReference type="InterPro" id="IPR008980">
    <property type="entry name" value="Capsid_hemagglutn"/>
</dbReference>
<dbReference type="InterPro" id="IPR001803">
    <property type="entry name" value="Orbi_VP7_capsid"/>
</dbReference>
<dbReference type="InterPro" id="IPR023178">
    <property type="entry name" value="Orbi_VP7_capsid_C"/>
</dbReference>
<dbReference type="InterPro" id="IPR023176">
    <property type="entry name" value="Orbi_VP7_capsid_N"/>
</dbReference>
<dbReference type="InterPro" id="IPR008935">
    <property type="entry name" value="Virus_capsid_a-hlx_vir"/>
</dbReference>
<dbReference type="Pfam" id="PF00897">
    <property type="entry name" value="Orbi_VP7"/>
    <property type="match status" value="1"/>
</dbReference>
<dbReference type="PRINTS" id="PR00903">
    <property type="entry name" value="VP7CAPSID"/>
</dbReference>
<dbReference type="SUPFAM" id="SSF48345">
    <property type="entry name" value="A virus capsid protein alpha-helical domain"/>
    <property type="match status" value="1"/>
</dbReference>
<dbReference type="SUPFAM" id="SSF49818">
    <property type="entry name" value="Viral protein domain"/>
    <property type="match status" value="1"/>
</dbReference>
<reference key="1">
    <citation type="journal article" date="1990" name="Nucleic Acids Res.">
        <title>The complete nucleotide sequence of genome segment 7 of bluetongue virus, serotype 1 from South Africa.</title>
        <authorList>
            <person name="Wade-Evans A.M."/>
        </authorList>
    </citation>
    <scope>NUCLEOTIDE SEQUENCE [GENOMIC RNA]</scope>
</reference>
<reference key="2">
    <citation type="journal article" date="1998" name="Nature">
        <title>The atomic structure of the bluetongue virus core.</title>
        <authorList>
            <person name="Grimes J.M."/>
            <person name="Burroughs J.N."/>
            <person name="Gouet P."/>
            <person name="Diprose J.M."/>
            <person name="Malby R."/>
            <person name="Zientara S."/>
            <person name="Mertens P.P."/>
            <person name="Stuart D.I."/>
        </authorList>
    </citation>
    <scope>X-RAY CRYSTALLOGRAPHY (3.5 ANGSTROMS)</scope>
</reference>
<gene>
    <name type="primary">Segment-7</name>
</gene>
<evidence type="ECO:0000255" key="1"/>
<evidence type="ECO:0000305" key="2"/>
<evidence type="ECO:0007829" key="3">
    <source>
        <dbReference type="PDB" id="2BTV"/>
    </source>
</evidence>
<organism>
    <name type="scientific">Bluetongue virus 1 (isolate South Africa)</name>
    <name type="common">BTV 1</name>
    <dbReference type="NCBI Taxonomy" id="10905"/>
    <lineage>
        <taxon>Viruses</taxon>
        <taxon>Riboviria</taxon>
        <taxon>Orthornavirae</taxon>
        <taxon>Duplornaviricota</taxon>
        <taxon>Resentoviricetes</taxon>
        <taxon>Reovirales</taxon>
        <taxon>Sedoreoviridae</taxon>
        <taxon>Orbivirus</taxon>
        <taxon>Bluetongue virus</taxon>
    </lineage>
</organism>
<proteinExistence type="evidence at protein level"/>
<protein>
    <recommendedName>
        <fullName>Core protein VP7</fullName>
    </recommendedName>
</protein>